<evidence type="ECO:0000255" key="1"/>
<evidence type="ECO:0000269" key="2">
    <source>
    </source>
</evidence>
<name>YQJ7_SCHPO</name>
<dbReference type="EMBL" id="CU329672">
    <property type="protein sequence ID" value="CAA20130.1"/>
    <property type="molecule type" value="Genomic_DNA"/>
</dbReference>
<dbReference type="PIR" id="T41175">
    <property type="entry name" value="T41175"/>
</dbReference>
<dbReference type="RefSeq" id="NP_588506.1">
    <property type="nucleotide sequence ID" value="NM_001023496.2"/>
</dbReference>
<dbReference type="SMR" id="O74480"/>
<dbReference type="BioGRID" id="275361">
    <property type="interactions" value="9"/>
</dbReference>
<dbReference type="FunCoup" id="O74480">
    <property type="interactions" value="4"/>
</dbReference>
<dbReference type="STRING" id="284812.O74480"/>
<dbReference type="iPTMnet" id="O74480"/>
<dbReference type="PaxDb" id="4896-SPCC1840.07c.1"/>
<dbReference type="EnsemblFungi" id="SPCC1840.07c.1">
    <property type="protein sequence ID" value="SPCC1840.07c.1:pep"/>
    <property type="gene ID" value="SPCC1840.07c"/>
</dbReference>
<dbReference type="KEGG" id="spo:2538780"/>
<dbReference type="PomBase" id="SPCC1840.07c"/>
<dbReference type="VEuPathDB" id="FungiDB:SPCC1840.07c"/>
<dbReference type="eggNOG" id="KOG0374">
    <property type="taxonomic scope" value="Eukaryota"/>
</dbReference>
<dbReference type="HOGENOM" id="CLU_042543_2_0_1"/>
<dbReference type="InParanoid" id="O74480"/>
<dbReference type="OMA" id="NEVLWFM"/>
<dbReference type="PhylomeDB" id="O74480"/>
<dbReference type="PRO" id="PR:O74480"/>
<dbReference type="Proteomes" id="UP000002485">
    <property type="component" value="Chromosome III"/>
</dbReference>
<dbReference type="GO" id="GO:0005783">
    <property type="term" value="C:endoplasmic reticulum"/>
    <property type="evidence" value="ECO:0007005"/>
    <property type="project" value="PomBase"/>
</dbReference>
<dbReference type="GO" id="GO:0000328">
    <property type="term" value="C:fungal-type vacuole lumen"/>
    <property type="evidence" value="ECO:0000266"/>
    <property type="project" value="PomBase"/>
</dbReference>
<dbReference type="GO" id="GO:0000298">
    <property type="term" value="F:endopolyphosphatase activity"/>
    <property type="evidence" value="ECO:0000266"/>
    <property type="project" value="PomBase"/>
</dbReference>
<dbReference type="GO" id="GO:0006112">
    <property type="term" value="P:energy reserve metabolic process"/>
    <property type="evidence" value="ECO:0000305"/>
    <property type="project" value="PomBase"/>
</dbReference>
<dbReference type="GO" id="GO:0006798">
    <property type="term" value="P:polyphosphate catabolic process"/>
    <property type="evidence" value="ECO:0000266"/>
    <property type="project" value="PomBase"/>
</dbReference>
<dbReference type="Gene3D" id="3.60.21.10">
    <property type="match status" value="1"/>
</dbReference>
<dbReference type="InterPro" id="IPR004843">
    <property type="entry name" value="Calcineurin-like_PHP_ApaH"/>
</dbReference>
<dbReference type="InterPro" id="IPR029052">
    <property type="entry name" value="Metallo-depent_PP-like"/>
</dbReference>
<dbReference type="PANTHER" id="PTHR46546">
    <property type="entry name" value="SHEWANELLA-LIKE PROTEIN PHOSPHATASE 1"/>
    <property type="match status" value="1"/>
</dbReference>
<dbReference type="PANTHER" id="PTHR46546:SF4">
    <property type="entry name" value="SHEWANELLA-LIKE PROTEIN PHOSPHATASE 1"/>
    <property type="match status" value="1"/>
</dbReference>
<dbReference type="Pfam" id="PF00149">
    <property type="entry name" value="Metallophos"/>
    <property type="match status" value="1"/>
</dbReference>
<dbReference type="SUPFAM" id="SSF56300">
    <property type="entry name" value="Metallo-dependent phosphatases"/>
    <property type="match status" value="1"/>
</dbReference>
<accession>O74480</accession>
<protein>
    <recommendedName>
        <fullName>Uncharacterized protein C1840.07c</fullName>
    </recommendedName>
</protein>
<proteinExistence type="inferred from homology"/>
<organism>
    <name type="scientific">Schizosaccharomyces pombe (strain 972 / ATCC 24843)</name>
    <name type="common">Fission yeast</name>
    <dbReference type="NCBI Taxonomy" id="284812"/>
    <lineage>
        <taxon>Eukaryota</taxon>
        <taxon>Fungi</taxon>
        <taxon>Dikarya</taxon>
        <taxon>Ascomycota</taxon>
        <taxon>Taphrinomycotina</taxon>
        <taxon>Schizosaccharomycetes</taxon>
        <taxon>Schizosaccharomycetales</taxon>
        <taxon>Schizosaccharomycetaceae</taxon>
        <taxon>Schizosaccharomyces</taxon>
    </lineage>
</organism>
<keyword id="KW-0256">Endoplasmic reticulum</keyword>
<keyword id="KW-1185">Reference proteome</keyword>
<keyword id="KW-0732">Signal</keyword>
<reference key="1">
    <citation type="journal article" date="2002" name="Nature">
        <title>The genome sequence of Schizosaccharomyces pombe.</title>
        <authorList>
            <person name="Wood V."/>
            <person name="Gwilliam R."/>
            <person name="Rajandream M.A."/>
            <person name="Lyne M.H."/>
            <person name="Lyne R."/>
            <person name="Stewart A."/>
            <person name="Sgouros J.G."/>
            <person name="Peat N."/>
            <person name="Hayles J."/>
            <person name="Baker S.G."/>
            <person name="Basham D."/>
            <person name="Bowman S."/>
            <person name="Brooks K."/>
            <person name="Brown D."/>
            <person name="Brown S."/>
            <person name="Chillingworth T."/>
            <person name="Churcher C.M."/>
            <person name="Collins M."/>
            <person name="Connor R."/>
            <person name="Cronin A."/>
            <person name="Davis P."/>
            <person name="Feltwell T."/>
            <person name="Fraser A."/>
            <person name="Gentles S."/>
            <person name="Goble A."/>
            <person name="Hamlin N."/>
            <person name="Harris D.E."/>
            <person name="Hidalgo J."/>
            <person name="Hodgson G."/>
            <person name="Holroyd S."/>
            <person name="Hornsby T."/>
            <person name="Howarth S."/>
            <person name="Huckle E.J."/>
            <person name="Hunt S."/>
            <person name="Jagels K."/>
            <person name="James K.D."/>
            <person name="Jones L."/>
            <person name="Jones M."/>
            <person name="Leather S."/>
            <person name="McDonald S."/>
            <person name="McLean J."/>
            <person name="Mooney P."/>
            <person name="Moule S."/>
            <person name="Mungall K.L."/>
            <person name="Murphy L.D."/>
            <person name="Niblett D."/>
            <person name="Odell C."/>
            <person name="Oliver K."/>
            <person name="O'Neil S."/>
            <person name="Pearson D."/>
            <person name="Quail M.A."/>
            <person name="Rabbinowitsch E."/>
            <person name="Rutherford K.M."/>
            <person name="Rutter S."/>
            <person name="Saunders D."/>
            <person name="Seeger K."/>
            <person name="Sharp S."/>
            <person name="Skelton J."/>
            <person name="Simmonds M.N."/>
            <person name="Squares R."/>
            <person name="Squares S."/>
            <person name="Stevens K."/>
            <person name="Taylor K."/>
            <person name="Taylor R.G."/>
            <person name="Tivey A."/>
            <person name="Walsh S.V."/>
            <person name="Warren T."/>
            <person name="Whitehead S."/>
            <person name="Woodward J.R."/>
            <person name="Volckaert G."/>
            <person name="Aert R."/>
            <person name="Robben J."/>
            <person name="Grymonprez B."/>
            <person name="Weltjens I."/>
            <person name="Vanstreels E."/>
            <person name="Rieger M."/>
            <person name="Schaefer M."/>
            <person name="Mueller-Auer S."/>
            <person name="Gabel C."/>
            <person name="Fuchs M."/>
            <person name="Duesterhoeft A."/>
            <person name="Fritzc C."/>
            <person name="Holzer E."/>
            <person name="Moestl D."/>
            <person name="Hilbert H."/>
            <person name="Borzym K."/>
            <person name="Langer I."/>
            <person name="Beck A."/>
            <person name="Lehrach H."/>
            <person name="Reinhardt R."/>
            <person name="Pohl T.M."/>
            <person name="Eger P."/>
            <person name="Zimmermann W."/>
            <person name="Wedler H."/>
            <person name="Wambutt R."/>
            <person name="Purnelle B."/>
            <person name="Goffeau A."/>
            <person name="Cadieu E."/>
            <person name="Dreano S."/>
            <person name="Gloux S."/>
            <person name="Lelaure V."/>
            <person name="Mottier S."/>
            <person name="Galibert F."/>
            <person name="Aves S.J."/>
            <person name="Xiang Z."/>
            <person name="Hunt C."/>
            <person name="Moore K."/>
            <person name="Hurst S.M."/>
            <person name="Lucas M."/>
            <person name="Rochet M."/>
            <person name="Gaillardin C."/>
            <person name="Tallada V.A."/>
            <person name="Garzon A."/>
            <person name="Thode G."/>
            <person name="Daga R.R."/>
            <person name="Cruzado L."/>
            <person name="Jimenez J."/>
            <person name="Sanchez M."/>
            <person name="del Rey F."/>
            <person name="Benito J."/>
            <person name="Dominguez A."/>
            <person name="Revuelta J.L."/>
            <person name="Moreno S."/>
            <person name="Armstrong J."/>
            <person name="Forsburg S.L."/>
            <person name="Cerutti L."/>
            <person name="Lowe T."/>
            <person name="McCombie W.R."/>
            <person name="Paulsen I."/>
            <person name="Potashkin J."/>
            <person name="Shpakovski G.V."/>
            <person name="Ussery D."/>
            <person name="Barrell B.G."/>
            <person name="Nurse P."/>
        </authorList>
    </citation>
    <scope>NUCLEOTIDE SEQUENCE [LARGE SCALE GENOMIC DNA]</scope>
    <source>
        <strain>972 / ATCC 24843</strain>
    </source>
</reference>
<reference key="2">
    <citation type="journal article" date="2006" name="Nat. Biotechnol.">
        <title>ORFeome cloning and global analysis of protein localization in the fission yeast Schizosaccharomyces pombe.</title>
        <authorList>
            <person name="Matsuyama A."/>
            <person name="Arai R."/>
            <person name="Yashiroda Y."/>
            <person name="Shirai A."/>
            <person name="Kamata A."/>
            <person name="Sekido S."/>
            <person name="Kobayashi Y."/>
            <person name="Hashimoto A."/>
            <person name="Hamamoto M."/>
            <person name="Hiraoka Y."/>
            <person name="Horinouchi S."/>
            <person name="Yoshida M."/>
        </authorList>
    </citation>
    <scope>SUBCELLULAR LOCATION [LARGE SCALE ANALYSIS]</scope>
</reference>
<comment type="subcellular location">
    <subcellularLocation>
        <location evidence="2">Endoplasmic reticulum</location>
    </subcellularLocation>
</comment>
<feature type="signal peptide" evidence="1">
    <location>
        <begin position="1"/>
        <end position="26"/>
    </location>
</feature>
<feature type="chain" id="PRO_0000310853" description="Uncharacterized protein C1840.07c">
    <location>
        <begin position="27"/>
        <end position="332"/>
    </location>
</feature>
<gene>
    <name type="ORF">SPCC1840.07c</name>
</gene>
<sequence>MSSLGKLLKLTLLGILLSFSCKFVFGYFNVNQLFDHEFIKVFPNFKGNVEAKIKYPTVVYAIGDIHGDFPNALDVLSAAGVVSPVFPHEWTAGNATLVQTGDVVDRGPDTRKLFRWFNDLHKQAEKHGGRVVRLLGNHEFMNAKGDWRYVHPGDKASYPEPSEENRIIDWGHSGEIGNLLLSEYNVTYKDNTTGSHFMHAGLSPEWAYREETVNELGKELLSHFMSREKIPEYLEDFWAIEGPMWYRGLAQLSEEEACEVALNVTKTLNVNRLVMGHTPQFHGIVSRCEGRILLIDTGLCSAYAGERAVLRISQNDTDSIVEAVYRGKIVKL</sequence>